<keyword id="KW-0067">ATP-binding</keyword>
<keyword id="KW-0963">Cytoplasm</keyword>
<keyword id="KW-0460">Magnesium</keyword>
<keyword id="KW-0479">Metal-binding</keyword>
<keyword id="KW-0547">Nucleotide-binding</keyword>
<keyword id="KW-0554">One-carbon metabolism</keyword>
<keyword id="KW-0630">Potassium</keyword>
<keyword id="KW-0808">Transferase</keyword>
<dbReference type="EC" id="2.5.1.6" evidence="1"/>
<dbReference type="EMBL" id="FM200053">
    <property type="protein sequence ID" value="CAR60993.1"/>
    <property type="molecule type" value="Genomic_DNA"/>
</dbReference>
<dbReference type="RefSeq" id="WP_001062140.1">
    <property type="nucleotide sequence ID" value="NC_011147.1"/>
</dbReference>
<dbReference type="SMR" id="B5BFP7"/>
<dbReference type="KEGG" id="sek:SSPA2752"/>
<dbReference type="HOGENOM" id="CLU_041802_1_1_6"/>
<dbReference type="UniPathway" id="UPA00315">
    <property type="reaction ID" value="UER00080"/>
</dbReference>
<dbReference type="Proteomes" id="UP000001869">
    <property type="component" value="Chromosome"/>
</dbReference>
<dbReference type="GO" id="GO:0005737">
    <property type="term" value="C:cytoplasm"/>
    <property type="evidence" value="ECO:0007669"/>
    <property type="project" value="UniProtKB-SubCell"/>
</dbReference>
<dbReference type="GO" id="GO:0005524">
    <property type="term" value="F:ATP binding"/>
    <property type="evidence" value="ECO:0007669"/>
    <property type="project" value="UniProtKB-UniRule"/>
</dbReference>
<dbReference type="GO" id="GO:0000287">
    <property type="term" value="F:magnesium ion binding"/>
    <property type="evidence" value="ECO:0007669"/>
    <property type="project" value="UniProtKB-UniRule"/>
</dbReference>
<dbReference type="GO" id="GO:0004478">
    <property type="term" value="F:methionine adenosyltransferase activity"/>
    <property type="evidence" value="ECO:0007669"/>
    <property type="project" value="UniProtKB-UniRule"/>
</dbReference>
<dbReference type="GO" id="GO:0006730">
    <property type="term" value="P:one-carbon metabolic process"/>
    <property type="evidence" value="ECO:0007669"/>
    <property type="project" value="UniProtKB-KW"/>
</dbReference>
<dbReference type="GO" id="GO:0006556">
    <property type="term" value="P:S-adenosylmethionine biosynthetic process"/>
    <property type="evidence" value="ECO:0007669"/>
    <property type="project" value="UniProtKB-UniRule"/>
</dbReference>
<dbReference type="CDD" id="cd18079">
    <property type="entry name" value="S-AdoMet_synt"/>
    <property type="match status" value="1"/>
</dbReference>
<dbReference type="FunFam" id="3.30.300.10:FF:000001">
    <property type="entry name" value="S-adenosylmethionine synthase"/>
    <property type="match status" value="1"/>
</dbReference>
<dbReference type="FunFam" id="3.30.300.10:FF:000003">
    <property type="entry name" value="S-adenosylmethionine synthase"/>
    <property type="match status" value="1"/>
</dbReference>
<dbReference type="Gene3D" id="3.30.300.10">
    <property type="match status" value="3"/>
</dbReference>
<dbReference type="HAMAP" id="MF_00086">
    <property type="entry name" value="S_AdoMet_synth1"/>
    <property type="match status" value="1"/>
</dbReference>
<dbReference type="InterPro" id="IPR022631">
    <property type="entry name" value="ADOMET_SYNTHASE_CS"/>
</dbReference>
<dbReference type="InterPro" id="IPR022630">
    <property type="entry name" value="S-AdoMet_synt_C"/>
</dbReference>
<dbReference type="InterPro" id="IPR022629">
    <property type="entry name" value="S-AdoMet_synt_central"/>
</dbReference>
<dbReference type="InterPro" id="IPR022628">
    <property type="entry name" value="S-AdoMet_synt_N"/>
</dbReference>
<dbReference type="InterPro" id="IPR002133">
    <property type="entry name" value="S-AdoMet_synthetase"/>
</dbReference>
<dbReference type="InterPro" id="IPR022636">
    <property type="entry name" value="S-AdoMet_synthetase_sfam"/>
</dbReference>
<dbReference type="NCBIfam" id="TIGR01034">
    <property type="entry name" value="metK"/>
    <property type="match status" value="1"/>
</dbReference>
<dbReference type="PANTHER" id="PTHR11964">
    <property type="entry name" value="S-ADENOSYLMETHIONINE SYNTHETASE"/>
    <property type="match status" value="1"/>
</dbReference>
<dbReference type="Pfam" id="PF02773">
    <property type="entry name" value="S-AdoMet_synt_C"/>
    <property type="match status" value="1"/>
</dbReference>
<dbReference type="Pfam" id="PF02772">
    <property type="entry name" value="S-AdoMet_synt_M"/>
    <property type="match status" value="1"/>
</dbReference>
<dbReference type="Pfam" id="PF00438">
    <property type="entry name" value="S-AdoMet_synt_N"/>
    <property type="match status" value="1"/>
</dbReference>
<dbReference type="PIRSF" id="PIRSF000497">
    <property type="entry name" value="MAT"/>
    <property type="match status" value="1"/>
</dbReference>
<dbReference type="SUPFAM" id="SSF55973">
    <property type="entry name" value="S-adenosylmethionine synthetase"/>
    <property type="match status" value="3"/>
</dbReference>
<dbReference type="PROSITE" id="PS00376">
    <property type="entry name" value="ADOMET_SYNTHASE_1"/>
    <property type="match status" value="1"/>
</dbReference>
<dbReference type="PROSITE" id="PS00377">
    <property type="entry name" value="ADOMET_SYNTHASE_2"/>
    <property type="match status" value="1"/>
</dbReference>
<comment type="function">
    <text evidence="1">Catalyzes the formation of S-adenosylmethionine (AdoMet) from methionine and ATP. The overall synthetic reaction is composed of two sequential steps, AdoMet formation and the subsequent tripolyphosphate hydrolysis which occurs prior to release of AdoMet from the enzyme.</text>
</comment>
<comment type="catalytic activity">
    <reaction evidence="1">
        <text>L-methionine + ATP + H2O = S-adenosyl-L-methionine + phosphate + diphosphate</text>
        <dbReference type="Rhea" id="RHEA:21080"/>
        <dbReference type="ChEBI" id="CHEBI:15377"/>
        <dbReference type="ChEBI" id="CHEBI:30616"/>
        <dbReference type="ChEBI" id="CHEBI:33019"/>
        <dbReference type="ChEBI" id="CHEBI:43474"/>
        <dbReference type="ChEBI" id="CHEBI:57844"/>
        <dbReference type="ChEBI" id="CHEBI:59789"/>
        <dbReference type="EC" id="2.5.1.6"/>
    </reaction>
</comment>
<comment type="cofactor">
    <cofactor evidence="1">
        <name>Mg(2+)</name>
        <dbReference type="ChEBI" id="CHEBI:18420"/>
    </cofactor>
    <text evidence="1">Binds 2 divalent ions per subunit.</text>
</comment>
<comment type="cofactor">
    <cofactor evidence="1">
        <name>K(+)</name>
        <dbReference type="ChEBI" id="CHEBI:29103"/>
    </cofactor>
    <text evidence="1">Binds 1 potassium ion per subunit.</text>
</comment>
<comment type="pathway">
    <text evidence="1">Amino-acid biosynthesis; S-adenosyl-L-methionine biosynthesis; S-adenosyl-L-methionine from L-methionine: step 1/1.</text>
</comment>
<comment type="subunit">
    <text evidence="1">Homotetramer; dimer of dimers.</text>
</comment>
<comment type="subcellular location">
    <subcellularLocation>
        <location evidence="1">Cytoplasm</location>
    </subcellularLocation>
</comment>
<comment type="similarity">
    <text evidence="1">Belongs to the AdoMet synthase family.</text>
</comment>
<gene>
    <name evidence="1" type="primary">metK</name>
    <name type="ordered locus">SSPA2752</name>
</gene>
<reference key="1">
    <citation type="journal article" date="2009" name="BMC Genomics">
        <title>Pseudogene accumulation in the evolutionary histories of Salmonella enterica serovars Paratyphi A and Typhi.</title>
        <authorList>
            <person name="Holt K.E."/>
            <person name="Thomson N.R."/>
            <person name="Wain J."/>
            <person name="Langridge G.C."/>
            <person name="Hasan R."/>
            <person name="Bhutta Z.A."/>
            <person name="Quail M.A."/>
            <person name="Norbertczak H."/>
            <person name="Walker D."/>
            <person name="Simmonds M."/>
            <person name="White B."/>
            <person name="Bason N."/>
            <person name="Mungall K."/>
            <person name="Dougan G."/>
            <person name="Parkhill J."/>
        </authorList>
    </citation>
    <scope>NUCLEOTIDE SEQUENCE [LARGE SCALE GENOMIC DNA]</scope>
    <source>
        <strain>AKU_12601</strain>
    </source>
</reference>
<feature type="chain" id="PRO_1000093083" description="S-adenosylmethionine synthase">
    <location>
        <begin position="1"/>
        <end position="384"/>
    </location>
</feature>
<feature type="region of interest" description="Flexible loop" evidence="1">
    <location>
        <begin position="99"/>
        <end position="109"/>
    </location>
</feature>
<feature type="binding site" description="in other chain" evidence="1">
    <location>
        <position position="15"/>
    </location>
    <ligand>
        <name>ATP</name>
        <dbReference type="ChEBI" id="CHEBI:30616"/>
        <note>ligand shared between two neighboring subunits</note>
    </ligand>
</feature>
<feature type="binding site" evidence="1">
    <location>
        <position position="17"/>
    </location>
    <ligand>
        <name>Mg(2+)</name>
        <dbReference type="ChEBI" id="CHEBI:18420"/>
    </ligand>
</feature>
<feature type="binding site" evidence="1">
    <location>
        <position position="43"/>
    </location>
    <ligand>
        <name>K(+)</name>
        <dbReference type="ChEBI" id="CHEBI:29103"/>
    </ligand>
</feature>
<feature type="binding site" description="in other chain" evidence="1">
    <location>
        <position position="56"/>
    </location>
    <ligand>
        <name>L-methionine</name>
        <dbReference type="ChEBI" id="CHEBI:57844"/>
        <note>ligand shared between two neighboring subunits</note>
    </ligand>
</feature>
<feature type="binding site" description="in other chain" evidence="1">
    <location>
        <position position="99"/>
    </location>
    <ligand>
        <name>L-methionine</name>
        <dbReference type="ChEBI" id="CHEBI:57844"/>
        <note>ligand shared between two neighboring subunits</note>
    </ligand>
</feature>
<feature type="binding site" description="in other chain" evidence="1">
    <location>
        <begin position="164"/>
        <end position="166"/>
    </location>
    <ligand>
        <name>ATP</name>
        <dbReference type="ChEBI" id="CHEBI:30616"/>
        <note>ligand shared between two neighboring subunits</note>
    </ligand>
</feature>
<feature type="binding site" description="in other chain" evidence="1">
    <location>
        <begin position="230"/>
        <end position="231"/>
    </location>
    <ligand>
        <name>ATP</name>
        <dbReference type="ChEBI" id="CHEBI:30616"/>
        <note>ligand shared between two neighboring subunits</note>
    </ligand>
</feature>
<feature type="binding site" evidence="1">
    <location>
        <position position="239"/>
    </location>
    <ligand>
        <name>ATP</name>
        <dbReference type="ChEBI" id="CHEBI:30616"/>
        <note>ligand shared between two neighboring subunits</note>
    </ligand>
</feature>
<feature type="binding site" evidence="1">
    <location>
        <position position="239"/>
    </location>
    <ligand>
        <name>L-methionine</name>
        <dbReference type="ChEBI" id="CHEBI:57844"/>
        <note>ligand shared between two neighboring subunits</note>
    </ligand>
</feature>
<feature type="binding site" description="in other chain" evidence="1">
    <location>
        <begin position="245"/>
        <end position="246"/>
    </location>
    <ligand>
        <name>ATP</name>
        <dbReference type="ChEBI" id="CHEBI:30616"/>
        <note>ligand shared between two neighboring subunits</note>
    </ligand>
</feature>
<feature type="binding site" evidence="1">
    <location>
        <position position="262"/>
    </location>
    <ligand>
        <name>ATP</name>
        <dbReference type="ChEBI" id="CHEBI:30616"/>
        <note>ligand shared between two neighboring subunits</note>
    </ligand>
</feature>
<feature type="binding site" evidence="1">
    <location>
        <position position="266"/>
    </location>
    <ligand>
        <name>ATP</name>
        <dbReference type="ChEBI" id="CHEBI:30616"/>
        <note>ligand shared between two neighboring subunits</note>
    </ligand>
</feature>
<feature type="binding site" description="in other chain" evidence="1">
    <location>
        <position position="270"/>
    </location>
    <ligand>
        <name>L-methionine</name>
        <dbReference type="ChEBI" id="CHEBI:57844"/>
        <note>ligand shared between two neighboring subunits</note>
    </ligand>
</feature>
<proteinExistence type="inferred from homology"/>
<protein>
    <recommendedName>
        <fullName evidence="1">S-adenosylmethionine synthase</fullName>
        <shortName evidence="1">AdoMet synthase</shortName>
        <ecNumber evidence="1">2.5.1.6</ecNumber>
    </recommendedName>
    <alternativeName>
        <fullName evidence="1">MAT</fullName>
    </alternativeName>
    <alternativeName>
        <fullName evidence="1">Methionine adenosyltransferase</fullName>
    </alternativeName>
</protein>
<organism>
    <name type="scientific">Salmonella paratyphi A (strain AKU_12601)</name>
    <dbReference type="NCBI Taxonomy" id="554290"/>
    <lineage>
        <taxon>Bacteria</taxon>
        <taxon>Pseudomonadati</taxon>
        <taxon>Pseudomonadota</taxon>
        <taxon>Gammaproteobacteria</taxon>
        <taxon>Enterobacterales</taxon>
        <taxon>Enterobacteriaceae</taxon>
        <taxon>Salmonella</taxon>
    </lineage>
</organism>
<name>METK_SALPK</name>
<evidence type="ECO:0000255" key="1">
    <source>
        <dbReference type="HAMAP-Rule" id="MF_00086"/>
    </source>
</evidence>
<accession>B5BFP7</accession>
<sequence length="384" mass="41953">MAKHLFTSESVSEGHPDKIADQISDAVLDAILQQDPKARVACETYVKTGMVLVGGEITTSAWVDIEEITRNTVREIGYVHSDMGFDANSCAVLSAIGKQSPDINQGVDRADPLEQGAGDQGLMFGYATNETDVLMPAPITYAHRLVQRQAEVRKNGTLPWLRPDAKSQVTFQYDDGKIVGIDAVVLSTQHAEDIDQKSLQEAVMEEIIKPILPSEWLNTSTKFFINPTGRFVIGGPMGDCGLTGRKIIVDTYGGMARHGGGAFSGKDPSKVDRSAAYAARYVAKNIVAAGLADRCEIQVSYAIGVAEPTSIMVETFGTEKVPAEQLILLVREFFDLRPYGLIQMLDLLHPIYKETAAYGHFGRENFPWEKTDKAQLLRDAAGLK</sequence>